<accession>F4HQ20</accession>
<accession>Q9C620</accession>
<protein>
    <recommendedName>
        <fullName evidence="5">LEAF RUST 10 DISEASE-RESISTANCE LOCUS RECEPTOR-LIKE PROTEIN KINASE-like 2.5</fullName>
        <ecNumber>2.7.11.1</ecNumber>
    </recommendedName>
    <alternativeName>
        <fullName evidence="6">Probable receptor-like serine/threonine-protein kinase LRK10L-2.5</fullName>
    </alternativeName>
</protein>
<comment type="catalytic activity">
    <reaction>
        <text>L-seryl-[protein] + ATP = O-phospho-L-seryl-[protein] + ADP + H(+)</text>
        <dbReference type="Rhea" id="RHEA:17989"/>
        <dbReference type="Rhea" id="RHEA-COMP:9863"/>
        <dbReference type="Rhea" id="RHEA-COMP:11604"/>
        <dbReference type="ChEBI" id="CHEBI:15378"/>
        <dbReference type="ChEBI" id="CHEBI:29999"/>
        <dbReference type="ChEBI" id="CHEBI:30616"/>
        <dbReference type="ChEBI" id="CHEBI:83421"/>
        <dbReference type="ChEBI" id="CHEBI:456216"/>
        <dbReference type="EC" id="2.7.11.1"/>
    </reaction>
</comment>
<comment type="catalytic activity">
    <reaction>
        <text>L-threonyl-[protein] + ATP = O-phospho-L-threonyl-[protein] + ADP + H(+)</text>
        <dbReference type="Rhea" id="RHEA:46608"/>
        <dbReference type="Rhea" id="RHEA-COMP:11060"/>
        <dbReference type="Rhea" id="RHEA-COMP:11605"/>
        <dbReference type="ChEBI" id="CHEBI:15378"/>
        <dbReference type="ChEBI" id="CHEBI:30013"/>
        <dbReference type="ChEBI" id="CHEBI:30616"/>
        <dbReference type="ChEBI" id="CHEBI:61977"/>
        <dbReference type="ChEBI" id="CHEBI:456216"/>
        <dbReference type="EC" id="2.7.11.1"/>
    </reaction>
</comment>
<comment type="subcellular location">
    <subcellularLocation>
        <location evidence="2">Membrane</location>
        <topology evidence="6">Single-pass type I membrane protein</topology>
    </subcellularLocation>
</comment>
<comment type="similarity">
    <text evidence="3">Belongs to the protein kinase superfamily. Ser/Thr protein kinase family.</text>
</comment>
<comment type="sequence caution" evidence="6">
    <conflict type="erroneous initiation">
        <sequence resource="EMBL-CDS" id="AAG50590"/>
    </conflict>
    <text>Truncated N-terminus.</text>
</comment>
<proteinExistence type="inferred from homology"/>
<organism>
    <name type="scientific">Arabidopsis thaliana</name>
    <name type="common">Mouse-ear cress</name>
    <dbReference type="NCBI Taxonomy" id="3702"/>
    <lineage>
        <taxon>Eukaryota</taxon>
        <taxon>Viridiplantae</taxon>
        <taxon>Streptophyta</taxon>
        <taxon>Embryophyta</taxon>
        <taxon>Tracheophyta</taxon>
        <taxon>Spermatophyta</taxon>
        <taxon>Magnoliopsida</taxon>
        <taxon>eudicotyledons</taxon>
        <taxon>Gunneridae</taxon>
        <taxon>Pentapetalae</taxon>
        <taxon>rosids</taxon>
        <taxon>malvids</taxon>
        <taxon>Brassicales</taxon>
        <taxon>Brassicaceae</taxon>
        <taxon>Camelineae</taxon>
        <taxon>Arabidopsis</taxon>
    </lineage>
</organism>
<reference key="1">
    <citation type="journal article" date="2000" name="Nature">
        <title>Sequence and analysis of chromosome 1 of the plant Arabidopsis thaliana.</title>
        <authorList>
            <person name="Theologis A."/>
            <person name="Ecker J.R."/>
            <person name="Palm C.J."/>
            <person name="Federspiel N.A."/>
            <person name="Kaul S."/>
            <person name="White O."/>
            <person name="Alonso J."/>
            <person name="Altafi H."/>
            <person name="Araujo R."/>
            <person name="Bowman C.L."/>
            <person name="Brooks S.Y."/>
            <person name="Buehler E."/>
            <person name="Chan A."/>
            <person name="Chao Q."/>
            <person name="Chen H."/>
            <person name="Cheuk R.F."/>
            <person name="Chin C.W."/>
            <person name="Chung M.K."/>
            <person name="Conn L."/>
            <person name="Conway A.B."/>
            <person name="Conway A.R."/>
            <person name="Creasy T.H."/>
            <person name="Dewar K."/>
            <person name="Dunn P."/>
            <person name="Etgu P."/>
            <person name="Feldblyum T.V."/>
            <person name="Feng J.-D."/>
            <person name="Fong B."/>
            <person name="Fujii C.Y."/>
            <person name="Gill J.E."/>
            <person name="Goldsmith A.D."/>
            <person name="Haas B."/>
            <person name="Hansen N.F."/>
            <person name="Hughes B."/>
            <person name="Huizar L."/>
            <person name="Hunter J.L."/>
            <person name="Jenkins J."/>
            <person name="Johnson-Hopson C."/>
            <person name="Khan S."/>
            <person name="Khaykin E."/>
            <person name="Kim C.J."/>
            <person name="Koo H.L."/>
            <person name="Kremenetskaia I."/>
            <person name="Kurtz D.B."/>
            <person name="Kwan A."/>
            <person name="Lam B."/>
            <person name="Langin-Hooper S."/>
            <person name="Lee A."/>
            <person name="Lee J.M."/>
            <person name="Lenz C.A."/>
            <person name="Li J.H."/>
            <person name="Li Y.-P."/>
            <person name="Lin X."/>
            <person name="Liu S.X."/>
            <person name="Liu Z.A."/>
            <person name="Luros J.S."/>
            <person name="Maiti R."/>
            <person name="Marziali A."/>
            <person name="Militscher J."/>
            <person name="Miranda M."/>
            <person name="Nguyen M."/>
            <person name="Nierman W.C."/>
            <person name="Osborne B.I."/>
            <person name="Pai G."/>
            <person name="Peterson J."/>
            <person name="Pham P.K."/>
            <person name="Rizzo M."/>
            <person name="Rooney T."/>
            <person name="Rowley D."/>
            <person name="Sakano H."/>
            <person name="Salzberg S.L."/>
            <person name="Schwartz J.R."/>
            <person name="Shinn P."/>
            <person name="Southwick A.M."/>
            <person name="Sun H."/>
            <person name="Tallon L.J."/>
            <person name="Tambunga G."/>
            <person name="Toriumi M.J."/>
            <person name="Town C.D."/>
            <person name="Utterback T."/>
            <person name="Van Aken S."/>
            <person name="Vaysberg M."/>
            <person name="Vysotskaia V.S."/>
            <person name="Walker M."/>
            <person name="Wu D."/>
            <person name="Yu G."/>
            <person name="Fraser C.M."/>
            <person name="Venter J.C."/>
            <person name="Davis R.W."/>
        </authorList>
    </citation>
    <scope>NUCLEOTIDE SEQUENCE [LARGE SCALE GENOMIC DNA]</scope>
    <source>
        <strain>cv. Columbia</strain>
    </source>
</reference>
<reference key="2">
    <citation type="journal article" date="2017" name="Plant J.">
        <title>Araport11: a complete reannotation of the Arabidopsis thaliana reference genome.</title>
        <authorList>
            <person name="Cheng C.Y."/>
            <person name="Krishnakumar V."/>
            <person name="Chan A.P."/>
            <person name="Thibaud-Nissen F."/>
            <person name="Schobel S."/>
            <person name="Town C.D."/>
        </authorList>
    </citation>
    <scope>GENOME REANNOTATION</scope>
    <source>
        <strain>cv. Columbia</strain>
    </source>
</reference>
<reference key="3">
    <citation type="journal article" date="2001" name="Proc. Natl. Acad. Sci. U.S.A.">
        <title>Receptor-like kinases from Arabidopsis form a monophyletic gene family related to animal receptor kinases.</title>
        <authorList>
            <person name="Shiu S.H."/>
            <person name="Bleecker A.B."/>
        </authorList>
    </citation>
    <scope>GENE FAMILY</scope>
</reference>
<reference key="4">
    <citation type="journal article" date="2003" name="Plant Physiol.">
        <title>Expansion of the receptor-like kinase/Pelle gene family and receptor-like proteins in Arabidopsis.</title>
        <authorList>
            <person name="Shiu S.H."/>
            <person name="Bleecker A.B."/>
        </authorList>
    </citation>
    <scope>GENE FAMILY</scope>
</reference>
<gene>
    <name evidence="5" type="primary">LRK10L-2.5</name>
    <name evidence="7" type="ordered locus">At1g66910</name>
    <name evidence="8" type="ORF">T4O24.8</name>
</gene>
<evidence type="ECO:0000250" key="1">
    <source>
        <dbReference type="UniProtKB" id="O48814"/>
    </source>
</evidence>
<evidence type="ECO:0000255" key="2"/>
<evidence type="ECO:0000255" key="3">
    <source>
        <dbReference type="PROSITE-ProRule" id="PRU00159"/>
    </source>
</evidence>
<evidence type="ECO:0000255" key="4">
    <source>
        <dbReference type="PROSITE-ProRule" id="PRU00498"/>
    </source>
</evidence>
<evidence type="ECO:0000303" key="5">
    <source>
    </source>
</evidence>
<evidence type="ECO:0000305" key="6"/>
<evidence type="ECO:0000312" key="7">
    <source>
        <dbReference type="Araport" id="AT1G66910"/>
    </source>
</evidence>
<evidence type="ECO:0000312" key="8">
    <source>
        <dbReference type="EMBL" id="AAG50590.1"/>
    </source>
</evidence>
<feature type="signal peptide" evidence="2">
    <location>
        <begin position="1"/>
        <end position="30"/>
    </location>
</feature>
<feature type="chain" id="PRO_5003311331" description="LEAF RUST 10 DISEASE-RESISTANCE LOCUS RECEPTOR-LIKE PROTEIN KINASE-like 2.5">
    <location>
        <begin position="31"/>
        <end position="666"/>
    </location>
</feature>
<feature type="topological domain" description="Extracellular" evidence="6">
    <location>
        <begin position="31"/>
        <end position="275"/>
    </location>
</feature>
<feature type="transmembrane region" description="Helical" evidence="2">
    <location>
        <begin position="276"/>
        <end position="296"/>
    </location>
</feature>
<feature type="topological domain" description="Cytoplasmic" evidence="6">
    <location>
        <begin position="297"/>
        <end position="666"/>
    </location>
</feature>
<feature type="domain" description="Protein kinase" evidence="3">
    <location>
        <begin position="348"/>
        <end position="636"/>
    </location>
</feature>
<feature type="active site" description="Proton acceptor" evidence="3">
    <location>
        <position position="471"/>
    </location>
</feature>
<feature type="binding site" evidence="3">
    <location>
        <begin position="354"/>
        <end position="362"/>
    </location>
    <ligand>
        <name>ATP</name>
        <dbReference type="ChEBI" id="CHEBI:30616"/>
    </ligand>
</feature>
<feature type="binding site" evidence="3">
    <location>
        <position position="376"/>
    </location>
    <ligand>
        <name>ATP</name>
        <dbReference type="ChEBI" id="CHEBI:30616"/>
    </ligand>
</feature>
<feature type="modified residue" description="Phosphotyrosine" evidence="1">
    <location>
        <position position="420"/>
    </location>
</feature>
<feature type="modified residue" description="Phosphothreonine" evidence="1">
    <location>
        <position position="508"/>
    </location>
</feature>
<feature type="modified residue" description="Phosphothreonine" evidence="1">
    <location>
        <position position="511"/>
    </location>
</feature>
<feature type="glycosylation site" description="N-linked (GlcNAc...) asparagine" evidence="4">
    <location>
        <position position="119"/>
    </location>
</feature>
<feature type="glycosylation site" description="N-linked (GlcNAc...) asparagine" evidence="4">
    <location>
        <position position="141"/>
    </location>
</feature>
<feature type="glycosylation site" description="N-linked (GlcNAc...) asparagine" evidence="4">
    <location>
        <position position="171"/>
    </location>
</feature>
<feature type="glycosylation site" description="N-linked (GlcNAc...) asparagine" evidence="4">
    <location>
        <position position="198"/>
    </location>
</feature>
<keyword id="KW-0067">ATP-binding</keyword>
<keyword id="KW-0325">Glycoprotein</keyword>
<keyword id="KW-0418">Kinase</keyword>
<keyword id="KW-0472">Membrane</keyword>
<keyword id="KW-0547">Nucleotide-binding</keyword>
<keyword id="KW-0597">Phosphoprotein</keyword>
<keyword id="KW-0675">Receptor</keyword>
<keyword id="KW-1185">Reference proteome</keyword>
<keyword id="KW-0723">Serine/threonine-protein kinase</keyword>
<keyword id="KW-0732">Signal</keyword>
<keyword id="KW-0808">Transferase</keyword>
<keyword id="KW-0812">Transmembrane</keyword>
<keyword id="KW-1133">Transmembrane helix</keyword>
<sequence>MINFSLSLTKSMSYSFIWMLFVIHISCVLSADGNHILCSPSFTCGNQRGLLYPFWIAGRKECGHPDFELDCNAGVPELSISSVKFRILGADYDSGIITLARSDNIDDPCLPNSFTTSFNETVLPLASTTDLLTIYYDCNRNVSSFVSTFVKELDCPDDGTDDRRNYYLTRNLTFLPPSLKLEGNSFLLNDFGGSCSRNVSNPASRTALNTLESTPSTDNLKIALEDGFALEVNSDCRTCIDSKGACGFSQTSSRFVCYYRQEPQNPTRNKVILKLFFIVIYVLGIGAASFAMMGVILVVTCLNCLIRRQRKTLNDPRMRTSDDSRQQNLKALIPLKHYSYAQVTSITKSFAEVIGKGGFGTVYRGTLYDGRSVAVKVLKESQGNGEDFINEVASMSQTSHVNIVTLLGFCSEGYKRAIIYEFMENGSLDKFISSKKSSTMDWRELYGIALGVARGLEYLHHGCRTRIVHFDIKPQNVLLDDNLSPKVSDFGLAKLCERKESILSLMDTRGTIGYIAPEVFSRVYGRVSHKSDVYSYGMLVLDIIGARNKTSTEDTTSSTSSMYFPEWIYRDLEKAHNGKSIETAISNEEDEIAKKMTLVGLWCIQPWPLDRPAMNRVVEMMEGNLDALEVPPRPVLQQIPTATLQESSTFSEDISAYTEICSINVA</sequence>
<dbReference type="EC" id="2.7.11.1"/>
<dbReference type="EMBL" id="AC083891">
    <property type="protein sequence ID" value="AAG50590.1"/>
    <property type="status" value="ALT_INIT"/>
    <property type="molecule type" value="Genomic_DNA"/>
</dbReference>
<dbReference type="EMBL" id="CP002684">
    <property type="protein sequence ID" value="AEE34570.1"/>
    <property type="molecule type" value="Genomic_DNA"/>
</dbReference>
<dbReference type="PIR" id="H96692">
    <property type="entry name" value="H96692"/>
</dbReference>
<dbReference type="RefSeq" id="NP_176863.2">
    <property type="nucleotide sequence ID" value="NM_105362.2"/>
</dbReference>
<dbReference type="SMR" id="F4HQ20"/>
<dbReference type="FunCoup" id="F4HQ20">
    <property type="interactions" value="467"/>
</dbReference>
<dbReference type="STRING" id="3702.F4HQ20"/>
<dbReference type="GlyCosmos" id="F4HQ20">
    <property type="glycosylation" value="4 sites, No reported glycans"/>
</dbReference>
<dbReference type="GlyGen" id="F4HQ20">
    <property type="glycosylation" value="4 sites"/>
</dbReference>
<dbReference type="PaxDb" id="3702-AT1G66910.1"/>
<dbReference type="EnsemblPlants" id="AT1G66910.1">
    <property type="protein sequence ID" value="AT1G66910.1"/>
    <property type="gene ID" value="AT1G66910"/>
</dbReference>
<dbReference type="GeneID" id="843009"/>
<dbReference type="Gramene" id="AT1G66910.1">
    <property type="protein sequence ID" value="AT1G66910.1"/>
    <property type="gene ID" value="AT1G66910"/>
</dbReference>
<dbReference type="KEGG" id="ath:AT1G66910"/>
<dbReference type="Araport" id="AT1G66910"/>
<dbReference type="TAIR" id="AT1G66910"/>
<dbReference type="eggNOG" id="KOG1187">
    <property type="taxonomic scope" value="Eukaryota"/>
</dbReference>
<dbReference type="HOGENOM" id="CLU_000288_115_3_1"/>
<dbReference type="InParanoid" id="F4HQ20"/>
<dbReference type="PRO" id="PR:F4HQ20"/>
<dbReference type="Proteomes" id="UP000006548">
    <property type="component" value="Chromosome 1"/>
</dbReference>
<dbReference type="ExpressionAtlas" id="F4HQ20">
    <property type="expression patterns" value="baseline and differential"/>
</dbReference>
<dbReference type="GO" id="GO:0016020">
    <property type="term" value="C:membrane"/>
    <property type="evidence" value="ECO:0007669"/>
    <property type="project" value="UniProtKB-SubCell"/>
</dbReference>
<dbReference type="GO" id="GO:0005524">
    <property type="term" value="F:ATP binding"/>
    <property type="evidence" value="ECO:0007669"/>
    <property type="project" value="UniProtKB-KW"/>
</dbReference>
<dbReference type="GO" id="GO:0030247">
    <property type="term" value="F:polysaccharide binding"/>
    <property type="evidence" value="ECO:0007669"/>
    <property type="project" value="InterPro"/>
</dbReference>
<dbReference type="GO" id="GO:0106310">
    <property type="term" value="F:protein serine kinase activity"/>
    <property type="evidence" value="ECO:0007669"/>
    <property type="project" value="RHEA"/>
</dbReference>
<dbReference type="GO" id="GO:0004674">
    <property type="term" value="F:protein serine/threonine kinase activity"/>
    <property type="evidence" value="ECO:0007669"/>
    <property type="project" value="UniProtKB-KW"/>
</dbReference>
<dbReference type="FunFam" id="1.10.510.10:FF:000590">
    <property type="entry name" value="PR5-like receptor kinase"/>
    <property type="match status" value="1"/>
</dbReference>
<dbReference type="FunFam" id="3.30.200.20:FF:000644">
    <property type="entry name" value="Suppressor of npr1-1 constitutive 4"/>
    <property type="match status" value="1"/>
</dbReference>
<dbReference type="Gene3D" id="3.30.200.20">
    <property type="entry name" value="Phosphorylase Kinase, domain 1"/>
    <property type="match status" value="1"/>
</dbReference>
<dbReference type="Gene3D" id="1.10.510.10">
    <property type="entry name" value="Transferase(Phosphotransferase) domain 1"/>
    <property type="match status" value="1"/>
</dbReference>
<dbReference type="InterPro" id="IPR011009">
    <property type="entry name" value="Kinase-like_dom_sf"/>
</dbReference>
<dbReference type="InterPro" id="IPR045874">
    <property type="entry name" value="LRK10/LRL21-25-like"/>
</dbReference>
<dbReference type="InterPro" id="IPR000719">
    <property type="entry name" value="Prot_kinase_dom"/>
</dbReference>
<dbReference type="InterPro" id="IPR017441">
    <property type="entry name" value="Protein_kinase_ATP_BS"/>
</dbReference>
<dbReference type="InterPro" id="IPR001245">
    <property type="entry name" value="Ser-Thr/Tyr_kinase_cat_dom"/>
</dbReference>
<dbReference type="InterPro" id="IPR008271">
    <property type="entry name" value="Ser/Thr_kinase_AS"/>
</dbReference>
<dbReference type="InterPro" id="IPR032872">
    <property type="entry name" value="WAK_assoc_C"/>
</dbReference>
<dbReference type="InterPro" id="IPR025287">
    <property type="entry name" value="WAK_GUB"/>
</dbReference>
<dbReference type="PANTHER" id="PTHR27009">
    <property type="entry name" value="RUST RESISTANCE KINASE LR10-RELATED"/>
    <property type="match status" value="1"/>
</dbReference>
<dbReference type="Pfam" id="PF13947">
    <property type="entry name" value="GUB_WAK_bind"/>
    <property type="match status" value="1"/>
</dbReference>
<dbReference type="Pfam" id="PF07714">
    <property type="entry name" value="PK_Tyr_Ser-Thr"/>
    <property type="match status" value="1"/>
</dbReference>
<dbReference type="Pfam" id="PF14380">
    <property type="entry name" value="WAK_assoc"/>
    <property type="match status" value="1"/>
</dbReference>
<dbReference type="SMART" id="SM00220">
    <property type="entry name" value="S_TKc"/>
    <property type="match status" value="1"/>
</dbReference>
<dbReference type="SUPFAM" id="SSF56112">
    <property type="entry name" value="Protein kinase-like (PK-like)"/>
    <property type="match status" value="1"/>
</dbReference>
<dbReference type="PROSITE" id="PS00107">
    <property type="entry name" value="PROTEIN_KINASE_ATP"/>
    <property type="match status" value="1"/>
</dbReference>
<dbReference type="PROSITE" id="PS50011">
    <property type="entry name" value="PROTEIN_KINASE_DOM"/>
    <property type="match status" value="1"/>
</dbReference>
<dbReference type="PROSITE" id="PS00108">
    <property type="entry name" value="PROTEIN_KINASE_ST"/>
    <property type="match status" value="1"/>
</dbReference>
<name>LRL25_ARATH</name>